<sequence>MPRSTKKGPFFDHHLIKKVESAAGSKRPIKTCSRRSVILPQMVGHTIAIHNGKNYHPVVINENMVGHKLGEFSITRVFKGHCGDKKSGK</sequence>
<organism>
    <name type="scientific">Xylella fastidiosa (strain M23)</name>
    <dbReference type="NCBI Taxonomy" id="405441"/>
    <lineage>
        <taxon>Bacteria</taxon>
        <taxon>Pseudomonadati</taxon>
        <taxon>Pseudomonadota</taxon>
        <taxon>Gammaproteobacteria</taxon>
        <taxon>Lysobacterales</taxon>
        <taxon>Lysobacteraceae</taxon>
        <taxon>Xylella</taxon>
    </lineage>
</organism>
<gene>
    <name evidence="1" type="primary">rpsS</name>
    <name type="ordered locus">XfasM23_0437</name>
</gene>
<comment type="function">
    <text evidence="1">Protein S19 forms a complex with S13 that binds strongly to the 16S ribosomal RNA.</text>
</comment>
<comment type="similarity">
    <text evidence="1">Belongs to the universal ribosomal protein uS19 family.</text>
</comment>
<protein>
    <recommendedName>
        <fullName evidence="1">Small ribosomal subunit protein uS19</fullName>
    </recommendedName>
    <alternativeName>
        <fullName evidence="2">30S ribosomal protein S19</fullName>
    </alternativeName>
</protein>
<keyword id="KW-0687">Ribonucleoprotein</keyword>
<keyword id="KW-0689">Ribosomal protein</keyword>
<keyword id="KW-0694">RNA-binding</keyword>
<keyword id="KW-0699">rRNA-binding</keyword>
<reference key="1">
    <citation type="journal article" date="2010" name="J. Bacteriol.">
        <title>Whole genome sequences of two Xylella fastidiosa strains (M12 and M23) causing almond leaf scorch disease in California.</title>
        <authorList>
            <person name="Chen J."/>
            <person name="Xie G."/>
            <person name="Han S."/>
            <person name="Chertkov O."/>
            <person name="Sims D."/>
            <person name="Civerolo E.L."/>
        </authorList>
    </citation>
    <scope>NUCLEOTIDE SEQUENCE [LARGE SCALE GENOMIC DNA]</scope>
    <source>
        <strain>M23</strain>
    </source>
</reference>
<accession>B2I8H3</accession>
<name>RS19_XYLF2</name>
<dbReference type="EMBL" id="CP001011">
    <property type="protein sequence ID" value="ACB91884.1"/>
    <property type="molecule type" value="Genomic_DNA"/>
</dbReference>
<dbReference type="RefSeq" id="WP_011097647.1">
    <property type="nucleotide sequence ID" value="NC_010577.1"/>
</dbReference>
<dbReference type="SMR" id="B2I8H3"/>
<dbReference type="GeneID" id="93904143"/>
<dbReference type="KEGG" id="xfn:XfasM23_0437"/>
<dbReference type="HOGENOM" id="CLU_144911_0_1_6"/>
<dbReference type="Proteomes" id="UP000001698">
    <property type="component" value="Chromosome"/>
</dbReference>
<dbReference type="GO" id="GO:0005737">
    <property type="term" value="C:cytoplasm"/>
    <property type="evidence" value="ECO:0007669"/>
    <property type="project" value="UniProtKB-ARBA"/>
</dbReference>
<dbReference type="GO" id="GO:0015935">
    <property type="term" value="C:small ribosomal subunit"/>
    <property type="evidence" value="ECO:0007669"/>
    <property type="project" value="InterPro"/>
</dbReference>
<dbReference type="GO" id="GO:0019843">
    <property type="term" value="F:rRNA binding"/>
    <property type="evidence" value="ECO:0007669"/>
    <property type="project" value="UniProtKB-UniRule"/>
</dbReference>
<dbReference type="GO" id="GO:0003735">
    <property type="term" value="F:structural constituent of ribosome"/>
    <property type="evidence" value="ECO:0007669"/>
    <property type="project" value="InterPro"/>
</dbReference>
<dbReference type="GO" id="GO:0000028">
    <property type="term" value="P:ribosomal small subunit assembly"/>
    <property type="evidence" value="ECO:0007669"/>
    <property type="project" value="TreeGrafter"/>
</dbReference>
<dbReference type="GO" id="GO:0006412">
    <property type="term" value="P:translation"/>
    <property type="evidence" value="ECO:0007669"/>
    <property type="project" value="UniProtKB-UniRule"/>
</dbReference>
<dbReference type="FunFam" id="3.30.860.10:FF:000001">
    <property type="entry name" value="30S ribosomal protein S19"/>
    <property type="match status" value="1"/>
</dbReference>
<dbReference type="Gene3D" id="3.30.860.10">
    <property type="entry name" value="30s Ribosomal Protein S19, Chain A"/>
    <property type="match status" value="1"/>
</dbReference>
<dbReference type="HAMAP" id="MF_00531">
    <property type="entry name" value="Ribosomal_uS19"/>
    <property type="match status" value="1"/>
</dbReference>
<dbReference type="InterPro" id="IPR002222">
    <property type="entry name" value="Ribosomal_uS19"/>
</dbReference>
<dbReference type="InterPro" id="IPR005732">
    <property type="entry name" value="Ribosomal_uS19_bac-type"/>
</dbReference>
<dbReference type="InterPro" id="IPR020934">
    <property type="entry name" value="Ribosomal_uS19_CS"/>
</dbReference>
<dbReference type="InterPro" id="IPR023575">
    <property type="entry name" value="Ribosomal_uS19_SF"/>
</dbReference>
<dbReference type="NCBIfam" id="TIGR01050">
    <property type="entry name" value="rpsS_bact"/>
    <property type="match status" value="1"/>
</dbReference>
<dbReference type="PANTHER" id="PTHR11880">
    <property type="entry name" value="RIBOSOMAL PROTEIN S19P FAMILY MEMBER"/>
    <property type="match status" value="1"/>
</dbReference>
<dbReference type="PANTHER" id="PTHR11880:SF8">
    <property type="entry name" value="SMALL RIBOSOMAL SUBUNIT PROTEIN US19M"/>
    <property type="match status" value="1"/>
</dbReference>
<dbReference type="Pfam" id="PF00203">
    <property type="entry name" value="Ribosomal_S19"/>
    <property type="match status" value="1"/>
</dbReference>
<dbReference type="PIRSF" id="PIRSF002144">
    <property type="entry name" value="Ribosomal_S19"/>
    <property type="match status" value="1"/>
</dbReference>
<dbReference type="PRINTS" id="PR00975">
    <property type="entry name" value="RIBOSOMALS19"/>
</dbReference>
<dbReference type="SUPFAM" id="SSF54570">
    <property type="entry name" value="Ribosomal protein S19"/>
    <property type="match status" value="1"/>
</dbReference>
<dbReference type="PROSITE" id="PS00323">
    <property type="entry name" value="RIBOSOMAL_S19"/>
    <property type="match status" value="1"/>
</dbReference>
<proteinExistence type="inferred from homology"/>
<evidence type="ECO:0000255" key="1">
    <source>
        <dbReference type="HAMAP-Rule" id="MF_00531"/>
    </source>
</evidence>
<evidence type="ECO:0000305" key="2"/>
<feature type="chain" id="PRO_1000128061" description="Small ribosomal subunit protein uS19">
    <location>
        <begin position="1"/>
        <end position="89"/>
    </location>
</feature>